<reference key="1">
    <citation type="journal article" date="1975" name="J. Biol. Chem.">
        <title>Amino acid sequence of tuberculin-active protein from Mycobacterium tuberculosis.</title>
        <authorList>
            <person name="Kuwabara S."/>
        </authorList>
    </citation>
    <scope>PROTEIN SEQUENCE</scope>
    <source>
        <strain>Human type Aoyama/B</strain>
    </source>
</reference>
<name>TUBE_MYCTX</name>
<evidence type="ECO:0000256" key="1">
    <source>
        <dbReference type="SAM" id="MobiDB-lite"/>
    </source>
</evidence>
<evidence type="ECO:0000269" key="2">
    <source>
    </source>
</evidence>
<organism>
    <name type="scientific">Mycobacterium tuberculosis</name>
    <dbReference type="NCBI Taxonomy" id="1773"/>
    <lineage>
        <taxon>Bacteria</taxon>
        <taxon>Bacillati</taxon>
        <taxon>Actinomycetota</taxon>
        <taxon>Actinomycetes</taxon>
        <taxon>Mycobacteriales</taxon>
        <taxon>Mycobacteriaceae</taxon>
        <taxon>Mycobacterium</taxon>
        <taxon>Mycobacterium tuberculosis complex</taxon>
    </lineage>
</organism>
<comment type="function">
    <text>Tuberculin is the soluble, proteinaceous cell substance of the bacterium, to which infected animals become hypersensitive and react characteristically to dermal injections.</text>
</comment>
<comment type="miscellaneous">
    <text>This protein is the most potent component with tuberculin activity so far purified and characterized.</text>
</comment>
<proteinExistence type="evidence at protein level"/>
<dbReference type="PIR" id="A03444">
    <property type="entry name" value="TKMYT"/>
</dbReference>
<dbReference type="InterPro" id="IPR022015">
    <property type="entry name" value="Tuberculin"/>
</dbReference>
<dbReference type="Pfam" id="PF12198">
    <property type="entry name" value="Tuberculin"/>
    <property type="match status" value="1"/>
</dbReference>
<protein>
    <recommendedName>
        <fullName>Tuberculin-active protein</fullName>
    </recommendedName>
</protein>
<keyword id="KW-0903">Direct protein sequencing</keyword>
<keyword id="KW-1015">Disulfide bond</keyword>
<feature type="chain" id="PRO_0000065696" description="Tuberculin-active protein">
    <location>
        <begin position="1"/>
        <end position="89"/>
    </location>
</feature>
<feature type="region of interest" description="Disordered" evidence="1">
    <location>
        <begin position="61"/>
        <end position="89"/>
    </location>
</feature>
<feature type="disulfide bond" evidence="2">
    <location>
        <begin position="27"/>
        <end position="59"/>
    </location>
</feature>
<sequence length="89" mass="9494">RLLDDTPEVKVLGAVADAIETPKAEPCIDLDVAGEATFAREDDLPDYVLYAEVTFHEICRDGGSESEGKNGSQMRLIADVGPESATVAK</sequence>
<accession>P02944</accession>